<organism>
    <name type="scientific">Leptospira borgpetersenii serovar Hardjo-bovis (strain L550)</name>
    <dbReference type="NCBI Taxonomy" id="355276"/>
    <lineage>
        <taxon>Bacteria</taxon>
        <taxon>Pseudomonadati</taxon>
        <taxon>Spirochaetota</taxon>
        <taxon>Spirochaetia</taxon>
        <taxon>Leptospirales</taxon>
        <taxon>Leptospiraceae</taxon>
        <taxon>Leptospira</taxon>
    </lineage>
</organism>
<reference key="1">
    <citation type="journal article" date="2006" name="Proc. Natl. Acad. Sci. U.S.A.">
        <title>Genome reduction in Leptospira borgpetersenii reflects limited transmission potential.</title>
        <authorList>
            <person name="Bulach D.M."/>
            <person name="Zuerner R.L."/>
            <person name="Wilson P."/>
            <person name="Seemann T."/>
            <person name="McGrath A."/>
            <person name="Cullen P.A."/>
            <person name="Davis J."/>
            <person name="Johnson M."/>
            <person name="Kuczek E."/>
            <person name="Alt D.P."/>
            <person name="Peterson-Burch B."/>
            <person name="Coppel R.L."/>
            <person name="Rood J.I."/>
            <person name="Davies J.K."/>
            <person name="Adler B."/>
        </authorList>
    </citation>
    <scope>NUCLEOTIDE SEQUENCE [LARGE SCALE GENOMIC DNA]</scope>
    <source>
        <strain>L550</strain>
    </source>
</reference>
<comment type="catalytic activity">
    <reaction evidence="1">
        <text>beta-D-fructose 1,6-bisphosphate + H2O = beta-D-fructose 6-phosphate + phosphate</text>
        <dbReference type="Rhea" id="RHEA:11064"/>
        <dbReference type="ChEBI" id="CHEBI:15377"/>
        <dbReference type="ChEBI" id="CHEBI:32966"/>
        <dbReference type="ChEBI" id="CHEBI:43474"/>
        <dbReference type="ChEBI" id="CHEBI:57634"/>
        <dbReference type="EC" id="3.1.3.11"/>
    </reaction>
</comment>
<comment type="cofactor">
    <cofactor evidence="1">
        <name>Mg(2+)</name>
        <dbReference type="ChEBI" id="CHEBI:18420"/>
    </cofactor>
    <text evidence="1">Binds 2 magnesium ions per subunit.</text>
</comment>
<comment type="pathway">
    <text evidence="1">Carbohydrate biosynthesis; gluconeogenesis.</text>
</comment>
<comment type="subunit">
    <text evidence="1">Homotetramer.</text>
</comment>
<comment type="subcellular location">
    <subcellularLocation>
        <location evidence="1">Cytoplasm</location>
    </subcellularLocation>
</comment>
<comment type="similarity">
    <text evidence="1">Belongs to the FBPase class 1 family.</text>
</comment>
<evidence type="ECO:0000255" key="1">
    <source>
        <dbReference type="HAMAP-Rule" id="MF_01855"/>
    </source>
</evidence>
<name>F16PA_LEPBL</name>
<sequence length="342" mass="37443">MSVHPTQTLSLSQYLIEEQLKLPQATGDFTALMSHLVYAAKIVSREVRKAGLLENVLGSNETVNVQGETQMKLDEYADKVFNHTLTRSGHLCILGSEEHEETVSVPSGYKIGKYTIAIDPLDGSSNIDANVSIGTIFSVHLRKSPADTPGTLSDLLQKGSGQRAAGYVLYGSSTMLVLCTGKGVSGFTLDPSCGEFILSHPDMQMPETGGIYSINEGNYNYWSDEVKNYIRDIKSIEGGKKPQSGRYIGSLVADFHRNLLKGGIFLYPNDTKSTKYPNGKLRLLYEAAPMAFIAEQAGGMAVTVYGERILDLTPKELHERTTLVVGSKKEVEHFLKFAPKKP</sequence>
<feature type="chain" id="PRO_0000364587" description="Fructose-1,6-bisphosphatase class 1">
    <location>
        <begin position="1"/>
        <end position="342"/>
    </location>
</feature>
<feature type="binding site" evidence="1">
    <location>
        <position position="97"/>
    </location>
    <ligand>
        <name>Mg(2+)</name>
        <dbReference type="ChEBI" id="CHEBI:18420"/>
        <label>1</label>
    </ligand>
</feature>
<feature type="binding site" evidence="1">
    <location>
        <position position="119"/>
    </location>
    <ligand>
        <name>Mg(2+)</name>
        <dbReference type="ChEBI" id="CHEBI:18420"/>
        <label>1</label>
    </ligand>
</feature>
<feature type="binding site" evidence="1">
    <location>
        <position position="119"/>
    </location>
    <ligand>
        <name>Mg(2+)</name>
        <dbReference type="ChEBI" id="CHEBI:18420"/>
        <label>2</label>
    </ligand>
</feature>
<feature type="binding site" evidence="1">
    <location>
        <position position="121"/>
    </location>
    <ligand>
        <name>Mg(2+)</name>
        <dbReference type="ChEBI" id="CHEBI:18420"/>
        <label>1</label>
    </ligand>
</feature>
<feature type="binding site" evidence="1">
    <location>
        <begin position="122"/>
        <end position="125"/>
    </location>
    <ligand>
        <name>substrate</name>
    </ligand>
</feature>
<feature type="binding site" evidence="1">
    <location>
        <position position="122"/>
    </location>
    <ligand>
        <name>Mg(2+)</name>
        <dbReference type="ChEBI" id="CHEBI:18420"/>
        <label>2</label>
    </ligand>
</feature>
<feature type="binding site" evidence="1">
    <location>
        <position position="215"/>
    </location>
    <ligand>
        <name>substrate</name>
    </ligand>
</feature>
<feature type="binding site" evidence="1">
    <location>
        <position position="247"/>
    </location>
    <ligand>
        <name>substrate</name>
    </ligand>
</feature>
<feature type="binding site" evidence="1">
    <location>
        <position position="280"/>
    </location>
    <ligand>
        <name>substrate</name>
    </ligand>
</feature>
<feature type="binding site" evidence="1">
    <location>
        <position position="286"/>
    </location>
    <ligand>
        <name>Mg(2+)</name>
        <dbReference type="ChEBI" id="CHEBI:18420"/>
        <label>2</label>
    </ligand>
</feature>
<gene>
    <name evidence="1" type="primary">fbp</name>
    <name type="ordered locus">LBL_1595</name>
</gene>
<dbReference type="EC" id="3.1.3.11" evidence="1"/>
<dbReference type="EMBL" id="CP000348">
    <property type="protein sequence ID" value="ABJ79054.1"/>
    <property type="molecule type" value="Genomic_DNA"/>
</dbReference>
<dbReference type="RefSeq" id="WP_011670221.1">
    <property type="nucleotide sequence ID" value="NC_008508.1"/>
</dbReference>
<dbReference type="SMR" id="Q051E1"/>
<dbReference type="KEGG" id="lbl:LBL_1595"/>
<dbReference type="PATRIC" id="fig|355276.3.peg.2020"/>
<dbReference type="HOGENOM" id="CLU_039977_2_2_12"/>
<dbReference type="UniPathway" id="UPA00138"/>
<dbReference type="GO" id="GO:0005829">
    <property type="term" value="C:cytosol"/>
    <property type="evidence" value="ECO:0007669"/>
    <property type="project" value="TreeGrafter"/>
</dbReference>
<dbReference type="GO" id="GO:0042132">
    <property type="term" value="F:fructose 1,6-bisphosphate 1-phosphatase activity"/>
    <property type="evidence" value="ECO:0007669"/>
    <property type="project" value="UniProtKB-UniRule"/>
</dbReference>
<dbReference type="GO" id="GO:0000287">
    <property type="term" value="F:magnesium ion binding"/>
    <property type="evidence" value="ECO:0007669"/>
    <property type="project" value="UniProtKB-UniRule"/>
</dbReference>
<dbReference type="GO" id="GO:0030388">
    <property type="term" value="P:fructose 1,6-bisphosphate metabolic process"/>
    <property type="evidence" value="ECO:0007669"/>
    <property type="project" value="TreeGrafter"/>
</dbReference>
<dbReference type="GO" id="GO:0006002">
    <property type="term" value="P:fructose 6-phosphate metabolic process"/>
    <property type="evidence" value="ECO:0007669"/>
    <property type="project" value="TreeGrafter"/>
</dbReference>
<dbReference type="GO" id="GO:0006000">
    <property type="term" value="P:fructose metabolic process"/>
    <property type="evidence" value="ECO:0007669"/>
    <property type="project" value="TreeGrafter"/>
</dbReference>
<dbReference type="GO" id="GO:0006094">
    <property type="term" value="P:gluconeogenesis"/>
    <property type="evidence" value="ECO:0007669"/>
    <property type="project" value="UniProtKB-UniRule"/>
</dbReference>
<dbReference type="GO" id="GO:0005986">
    <property type="term" value="P:sucrose biosynthetic process"/>
    <property type="evidence" value="ECO:0007669"/>
    <property type="project" value="TreeGrafter"/>
</dbReference>
<dbReference type="CDD" id="cd00354">
    <property type="entry name" value="FBPase"/>
    <property type="match status" value="1"/>
</dbReference>
<dbReference type="FunFam" id="3.30.540.10:FF:000002">
    <property type="entry name" value="Fructose-1,6-bisphosphatase class 1"/>
    <property type="match status" value="1"/>
</dbReference>
<dbReference type="FunFam" id="3.40.190.80:FF:000001">
    <property type="entry name" value="Fructose-1,6-bisphosphatase class 1"/>
    <property type="match status" value="1"/>
</dbReference>
<dbReference type="Gene3D" id="3.40.190.80">
    <property type="match status" value="1"/>
</dbReference>
<dbReference type="Gene3D" id="3.30.540.10">
    <property type="entry name" value="Fructose-1,6-Bisphosphatase, subunit A, domain 1"/>
    <property type="match status" value="1"/>
</dbReference>
<dbReference type="HAMAP" id="MF_01855">
    <property type="entry name" value="FBPase_class1"/>
    <property type="match status" value="1"/>
</dbReference>
<dbReference type="InterPro" id="IPR044015">
    <property type="entry name" value="FBPase_C_dom"/>
</dbReference>
<dbReference type="InterPro" id="IPR000146">
    <property type="entry name" value="FBPase_class-1"/>
</dbReference>
<dbReference type="InterPro" id="IPR033391">
    <property type="entry name" value="FBPase_N"/>
</dbReference>
<dbReference type="InterPro" id="IPR028343">
    <property type="entry name" value="FBPtase"/>
</dbReference>
<dbReference type="InterPro" id="IPR020548">
    <property type="entry name" value="Fructose_bisphosphatase_AS"/>
</dbReference>
<dbReference type="NCBIfam" id="NF006778">
    <property type="entry name" value="PRK09293.1-1"/>
    <property type="match status" value="1"/>
</dbReference>
<dbReference type="PANTHER" id="PTHR11556">
    <property type="entry name" value="FRUCTOSE-1,6-BISPHOSPHATASE-RELATED"/>
    <property type="match status" value="1"/>
</dbReference>
<dbReference type="PANTHER" id="PTHR11556:SF35">
    <property type="entry name" value="SEDOHEPTULOSE-1,7-BISPHOSPHATASE, CHLOROPLASTIC"/>
    <property type="match status" value="1"/>
</dbReference>
<dbReference type="Pfam" id="PF00316">
    <property type="entry name" value="FBPase"/>
    <property type="match status" value="1"/>
</dbReference>
<dbReference type="Pfam" id="PF18913">
    <property type="entry name" value="FBPase_C"/>
    <property type="match status" value="1"/>
</dbReference>
<dbReference type="PIRSF" id="PIRSF500210">
    <property type="entry name" value="FBPtase"/>
    <property type="match status" value="1"/>
</dbReference>
<dbReference type="PIRSF" id="PIRSF000904">
    <property type="entry name" value="FBPtase_SBPase"/>
    <property type="match status" value="1"/>
</dbReference>
<dbReference type="PRINTS" id="PR00115">
    <property type="entry name" value="F16BPHPHTASE"/>
</dbReference>
<dbReference type="SUPFAM" id="SSF56655">
    <property type="entry name" value="Carbohydrate phosphatase"/>
    <property type="match status" value="1"/>
</dbReference>
<dbReference type="PROSITE" id="PS00124">
    <property type="entry name" value="FBPASE"/>
    <property type="match status" value="1"/>
</dbReference>
<proteinExistence type="inferred from homology"/>
<keyword id="KW-0119">Carbohydrate metabolism</keyword>
<keyword id="KW-0963">Cytoplasm</keyword>
<keyword id="KW-0378">Hydrolase</keyword>
<keyword id="KW-0460">Magnesium</keyword>
<keyword id="KW-0479">Metal-binding</keyword>
<protein>
    <recommendedName>
        <fullName evidence="1">Fructose-1,6-bisphosphatase class 1</fullName>
        <shortName evidence="1">FBPase class 1</shortName>
        <ecNumber evidence="1">3.1.3.11</ecNumber>
    </recommendedName>
    <alternativeName>
        <fullName evidence="1">D-fructose-1,6-bisphosphate 1-phosphohydrolase class 1</fullName>
    </alternativeName>
</protein>
<accession>Q051E1</accession>